<keyword id="KW-0119">Carbohydrate metabolism</keyword>
<keyword id="KW-0963">Cytoplasm</keyword>
<keyword id="KW-0378">Hydrolase</keyword>
<keyword id="KW-0460">Magnesium</keyword>
<keyword id="KW-0479">Metal-binding</keyword>
<comment type="catalytic activity">
    <reaction evidence="1">
        <text>beta-D-fructose 1,6-bisphosphate + H2O = beta-D-fructose 6-phosphate + phosphate</text>
        <dbReference type="Rhea" id="RHEA:11064"/>
        <dbReference type="ChEBI" id="CHEBI:15377"/>
        <dbReference type="ChEBI" id="CHEBI:32966"/>
        <dbReference type="ChEBI" id="CHEBI:43474"/>
        <dbReference type="ChEBI" id="CHEBI:57634"/>
        <dbReference type="EC" id="3.1.3.11"/>
    </reaction>
</comment>
<comment type="cofactor">
    <cofactor evidence="1">
        <name>Mg(2+)</name>
        <dbReference type="ChEBI" id="CHEBI:18420"/>
    </cofactor>
    <text evidence="1">Binds 2 magnesium ions per subunit.</text>
</comment>
<comment type="pathway">
    <text evidence="1">Carbohydrate biosynthesis; gluconeogenesis.</text>
</comment>
<comment type="subunit">
    <text evidence="1">Homotetramer.</text>
</comment>
<comment type="subcellular location">
    <subcellularLocation>
        <location evidence="1">Cytoplasm</location>
    </subcellularLocation>
</comment>
<comment type="similarity">
    <text evidence="1">Belongs to the FBPase class 1 family.</text>
</comment>
<protein>
    <recommendedName>
        <fullName evidence="1">Fructose-1,6-bisphosphatase class 1</fullName>
        <shortName evidence="1">FBPase class 1</shortName>
        <ecNumber evidence="1">3.1.3.11</ecNumber>
    </recommendedName>
    <alternativeName>
        <fullName evidence="1">D-fructose-1,6-bisphosphate 1-phosphohydrolase class 1</fullName>
    </alternativeName>
</protein>
<gene>
    <name evidence="1" type="primary">fbp</name>
    <name type="ordered locus">HPAG1_1483</name>
</gene>
<proteinExistence type="inferred from homology"/>
<sequence length="290" mass="32944">MDYKHFKGKHANIVIEIISLLEKGVKKAQEILEKPDAGSYTKLENSSGDTPIKADLALDKFLEENFLSLENIKSVFSEEKETPVTKENGSYLIAYDPLDGSSVMEANFLVGTIIGIYEKDYKAQNLVASLYVVFGHKIELMVALEEVYRYAFYQNKFHFIETIVLENKGKIVASGGNQKDFSLGLKKALEGFFAENYRLRYSGSMVADVHHVLIKKGGMFSYPQKKLRKLFEVFPLALIIEKAKGEAFYFDKGVKKRLLEQSVESYHEKSECYLASPHEAQILEKHLKGE</sequence>
<dbReference type="EC" id="3.1.3.11" evidence="1"/>
<dbReference type="EMBL" id="CP000241">
    <property type="protein sequence ID" value="ABF85550.1"/>
    <property type="molecule type" value="Genomic_DNA"/>
</dbReference>
<dbReference type="RefSeq" id="WP_000384745.1">
    <property type="nucleotide sequence ID" value="NC_008086.1"/>
</dbReference>
<dbReference type="SMR" id="Q1CR72"/>
<dbReference type="KEGG" id="hpa:HPAG1_1483"/>
<dbReference type="HOGENOM" id="CLU_039977_3_0_7"/>
<dbReference type="UniPathway" id="UPA00138"/>
<dbReference type="GO" id="GO:0005829">
    <property type="term" value="C:cytosol"/>
    <property type="evidence" value="ECO:0007669"/>
    <property type="project" value="TreeGrafter"/>
</dbReference>
<dbReference type="GO" id="GO:0042132">
    <property type="term" value="F:fructose 1,6-bisphosphate 1-phosphatase activity"/>
    <property type="evidence" value="ECO:0007669"/>
    <property type="project" value="UniProtKB-UniRule"/>
</dbReference>
<dbReference type="GO" id="GO:0000287">
    <property type="term" value="F:magnesium ion binding"/>
    <property type="evidence" value="ECO:0007669"/>
    <property type="project" value="UniProtKB-UniRule"/>
</dbReference>
<dbReference type="GO" id="GO:0030388">
    <property type="term" value="P:fructose 1,6-bisphosphate metabolic process"/>
    <property type="evidence" value="ECO:0007669"/>
    <property type="project" value="TreeGrafter"/>
</dbReference>
<dbReference type="GO" id="GO:0006002">
    <property type="term" value="P:fructose 6-phosphate metabolic process"/>
    <property type="evidence" value="ECO:0007669"/>
    <property type="project" value="TreeGrafter"/>
</dbReference>
<dbReference type="GO" id="GO:0006000">
    <property type="term" value="P:fructose metabolic process"/>
    <property type="evidence" value="ECO:0007669"/>
    <property type="project" value="TreeGrafter"/>
</dbReference>
<dbReference type="GO" id="GO:0006094">
    <property type="term" value="P:gluconeogenesis"/>
    <property type="evidence" value="ECO:0007669"/>
    <property type="project" value="UniProtKB-UniRule"/>
</dbReference>
<dbReference type="GO" id="GO:0005986">
    <property type="term" value="P:sucrose biosynthetic process"/>
    <property type="evidence" value="ECO:0007669"/>
    <property type="project" value="TreeGrafter"/>
</dbReference>
<dbReference type="FunFam" id="3.30.540.10:FF:000036">
    <property type="entry name" value="Fructose-1,6-bisphosphatase class 1"/>
    <property type="match status" value="1"/>
</dbReference>
<dbReference type="FunFam" id="3.40.190.80:FF:000028">
    <property type="entry name" value="Fructose-1,6-bisphosphatase class 1"/>
    <property type="match status" value="1"/>
</dbReference>
<dbReference type="Gene3D" id="3.40.190.80">
    <property type="match status" value="1"/>
</dbReference>
<dbReference type="Gene3D" id="3.30.540.10">
    <property type="entry name" value="Fructose-1,6-Bisphosphatase, subunit A, domain 1"/>
    <property type="match status" value="1"/>
</dbReference>
<dbReference type="HAMAP" id="MF_01855">
    <property type="entry name" value="FBPase_class1"/>
    <property type="match status" value="1"/>
</dbReference>
<dbReference type="InterPro" id="IPR044015">
    <property type="entry name" value="FBPase_C_dom"/>
</dbReference>
<dbReference type="InterPro" id="IPR000146">
    <property type="entry name" value="FBPase_class-1"/>
</dbReference>
<dbReference type="InterPro" id="IPR033391">
    <property type="entry name" value="FBPase_N"/>
</dbReference>
<dbReference type="InterPro" id="IPR023079">
    <property type="entry name" value="SBPase"/>
</dbReference>
<dbReference type="NCBIfam" id="NF006781">
    <property type="entry name" value="PRK09293.2-1"/>
    <property type="match status" value="1"/>
</dbReference>
<dbReference type="PANTHER" id="PTHR11556">
    <property type="entry name" value="FRUCTOSE-1,6-BISPHOSPHATASE-RELATED"/>
    <property type="match status" value="1"/>
</dbReference>
<dbReference type="PANTHER" id="PTHR11556:SF35">
    <property type="entry name" value="SEDOHEPTULOSE-1,7-BISPHOSPHATASE, CHLOROPLASTIC"/>
    <property type="match status" value="1"/>
</dbReference>
<dbReference type="Pfam" id="PF00316">
    <property type="entry name" value="FBPase"/>
    <property type="match status" value="1"/>
</dbReference>
<dbReference type="Pfam" id="PF18913">
    <property type="entry name" value="FBPase_C"/>
    <property type="match status" value="1"/>
</dbReference>
<dbReference type="PIRSF" id="PIRSF000904">
    <property type="entry name" value="FBPtase_SBPase"/>
    <property type="match status" value="1"/>
</dbReference>
<dbReference type="PRINTS" id="PR01958">
    <property type="entry name" value="S17BPHPHTASE"/>
</dbReference>
<dbReference type="SUPFAM" id="SSF56655">
    <property type="entry name" value="Carbohydrate phosphatase"/>
    <property type="match status" value="1"/>
</dbReference>
<organism>
    <name type="scientific">Helicobacter pylori (strain HPAG1)</name>
    <dbReference type="NCBI Taxonomy" id="357544"/>
    <lineage>
        <taxon>Bacteria</taxon>
        <taxon>Pseudomonadati</taxon>
        <taxon>Campylobacterota</taxon>
        <taxon>Epsilonproteobacteria</taxon>
        <taxon>Campylobacterales</taxon>
        <taxon>Helicobacteraceae</taxon>
        <taxon>Helicobacter</taxon>
    </lineage>
</organism>
<feature type="chain" id="PRO_0000364575" description="Fructose-1,6-bisphosphatase class 1">
    <location>
        <begin position="1"/>
        <end position="290"/>
    </location>
</feature>
<feature type="binding site" evidence="1">
    <location>
        <position position="78"/>
    </location>
    <ligand>
        <name>Mg(2+)</name>
        <dbReference type="ChEBI" id="CHEBI:18420"/>
        <label>1</label>
    </ligand>
</feature>
<feature type="binding site" evidence="1">
    <location>
        <position position="96"/>
    </location>
    <ligand>
        <name>Mg(2+)</name>
        <dbReference type="ChEBI" id="CHEBI:18420"/>
        <label>1</label>
    </ligand>
</feature>
<feature type="binding site" evidence="1">
    <location>
        <position position="96"/>
    </location>
    <ligand>
        <name>Mg(2+)</name>
        <dbReference type="ChEBI" id="CHEBI:18420"/>
        <label>2</label>
    </ligand>
</feature>
<feature type="binding site" evidence="1">
    <location>
        <position position="98"/>
    </location>
    <ligand>
        <name>Mg(2+)</name>
        <dbReference type="ChEBI" id="CHEBI:18420"/>
        <label>1</label>
    </ligand>
</feature>
<feature type="binding site" evidence="1">
    <location>
        <begin position="99"/>
        <end position="102"/>
    </location>
    <ligand>
        <name>substrate</name>
    </ligand>
</feature>
<feature type="binding site" evidence="1">
    <location>
        <position position="99"/>
    </location>
    <ligand>
        <name>Mg(2+)</name>
        <dbReference type="ChEBI" id="CHEBI:18420"/>
        <label>2</label>
    </ligand>
</feature>
<feature type="binding site" evidence="1">
    <location>
        <position position="201"/>
    </location>
    <ligand>
        <name>substrate</name>
    </ligand>
</feature>
<feature type="binding site" evidence="1">
    <location>
        <position position="226"/>
    </location>
    <ligand>
        <name>substrate</name>
    </ligand>
</feature>
<feature type="binding site" evidence="1">
    <location>
        <position position="232"/>
    </location>
    <ligand>
        <name>Mg(2+)</name>
        <dbReference type="ChEBI" id="CHEBI:18420"/>
        <label>2</label>
    </ligand>
</feature>
<name>F16PA_HELPH</name>
<evidence type="ECO:0000255" key="1">
    <source>
        <dbReference type="HAMAP-Rule" id="MF_01855"/>
    </source>
</evidence>
<reference key="1">
    <citation type="journal article" date="2006" name="Proc. Natl. Acad. Sci. U.S.A.">
        <title>The complete genome sequence of a chronic atrophic gastritis Helicobacter pylori strain: evolution during disease progression.</title>
        <authorList>
            <person name="Oh J.D."/>
            <person name="Kling-Baeckhed H."/>
            <person name="Giannakis M."/>
            <person name="Xu J."/>
            <person name="Fulton R.S."/>
            <person name="Fulton L.A."/>
            <person name="Cordum H.S."/>
            <person name="Wang C."/>
            <person name="Elliott G."/>
            <person name="Edwards J."/>
            <person name="Mardis E.R."/>
            <person name="Engstrand L.G."/>
            <person name="Gordon J.I."/>
        </authorList>
    </citation>
    <scope>NUCLEOTIDE SEQUENCE [LARGE SCALE GENOMIC DNA]</scope>
    <source>
        <strain>HPAG1</strain>
    </source>
</reference>
<accession>Q1CR72</accession>